<reference key="1">
    <citation type="journal article" date="2005" name="Proc. Natl. Acad. Sci. U.S.A.">
        <title>The complete genome sequence of Mycobacterium avium subspecies paratuberculosis.</title>
        <authorList>
            <person name="Li L."/>
            <person name="Bannantine J.P."/>
            <person name="Zhang Q."/>
            <person name="Amonsin A."/>
            <person name="May B.J."/>
            <person name="Alt D."/>
            <person name="Banerji N."/>
            <person name="Kanjilal S."/>
            <person name="Kapur V."/>
        </authorList>
    </citation>
    <scope>NUCLEOTIDE SEQUENCE [LARGE SCALE GENOMIC DNA]</scope>
    <source>
        <strain>ATCC BAA-968 / K-10</strain>
    </source>
</reference>
<dbReference type="EMBL" id="AE016958">
    <property type="protein sequence ID" value="AAS04769.1"/>
    <property type="molecule type" value="Genomic_DNA"/>
</dbReference>
<dbReference type="RefSeq" id="WP_003873221.1">
    <property type="nucleotide sequence ID" value="NZ_CP106873.1"/>
</dbReference>
<dbReference type="SMR" id="Q73X58"/>
<dbReference type="STRING" id="262316.MAP_2452c"/>
<dbReference type="KEGG" id="mpa:MAP_2452c"/>
<dbReference type="eggNOG" id="COG0224">
    <property type="taxonomic scope" value="Bacteria"/>
</dbReference>
<dbReference type="HOGENOM" id="CLU_050669_0_0_11"/>
<dbReference type="Proteomes" id="UP000000580">
    <property type="component" value="Chromosome"/>
</dbReference>
<dbReference type="GO" id="GO:0005886">
    <property type="term" value="C:plasma membrane"/>
    <property type="evidence" value="ECO:0007669"/>
    <property type="project" value="UniProtKB-SubCell"/>
</dbReference>
<dbReference type="GO" id="GO:0045259">
    <property type="term" value="C:proton-transporting ATP synthase complex"/>
    <property type="evidence" value="ECO:0007669"/>
    <property type="project" value="UniProtKB-KW"/>
</dbReference>
<dbReference type="GO" id="GO:0005524">
    <property type="term" value="F:ATP binding"/>
    <property type="evidence" value="ECO:0007669"/>
    <property type="project" value="UniProtKB-UniRule"/>
</dbReference>
<dbReference type="GO" id="GO:0046933">
    <property type="term" value="F:proton-transporting ATP synthase activity, rotational mechanism"/>
    <property type="evidence" value="ECO:0007669"/>
    <property type="project" value="UniProtKB-UniRule"/>
</dbReference>
<dbReference type="GO" id="GO:0042777">
    <property type="term" value="P:proton motive force-driven plasma membrane ATP synthesis"/>
    <property type="evidence" value="ECO:0007669"/>
    <property type="project" value="UniProtKB-UniRule"/>
</dbReference>
<dbReference type="CDD" id="cd12151">
    <property type="entry name" value="F1-ATPase_gamma"/>
    <property type="match status" value="1"/>
</dbReference>
<dbReference type="Gene3D" id="3.40.1380.10">
    <property type="match status" value="1"/>
</dbReference>
<dbReference type="Gene3D" id="1.10.287.80">
    <property type="entry name" value="ATP synthase, gamma subunit, helix hairpin domain"/>
    <property type="match status" value="1"/>
</dbReference>
<dbReference type="HAMAP" id="MF_00815">
    <property type="entry name" value="ATP_synth_gamma_bact"/>
    <property type="match status" value="1"/>
</dbReference>
<dbReference type="InterPro" id="IPR035968">
    <property type="entry name" value="ATP_synth_F1_ATPase_gsu"/>
</dbReference>
<dbReference type="InterPro" id="IPR000131">
    <property type="entry name" value="ATP_synth_F1_gsu"/>
</dbReference>
<dbReference type="InterPro" id="IPR023632">
    <property type="entry name" value="ATP_synth_F1_gsu_CS"/>
</dbReference>
<dbReference type="NCBIfam" id="TIGR01146">
    <property type="entry name" value="ATPsyn_F1gamma"/>
    <property type="match status" value="1"/>
</dbReference>
<dbReference type="NCBIfam" id="NF004145">
    <property type="entry name" value="PRK05621.1-2"/>
    <property type="match status" value="1"/>
</dbReference>
<dbReference type="PANTHER" id="PTHR11693">
    <property type="entry name" value="ATP SYNTHASE GAMMA CHAIN"/>
    <property type="match status" value="1"/>
</dbReference>
<dbReference type="PANTHER" id="PTHR11693:SF22">
    <property type="entry name" value="ATP SYNTHASE SUBUNIT GAMMA, MITOCHONDRIAL"/>
    <property type="match status" value="1"/>
</dbReference>
<dbReference type="Pfam" id="PF00231">
    <property type="entry name" value="ATP-synt"/>
    <property type="match status" value="1"/>
</dbReference>
<dbReference type="PRINTS" id="PR00126">
    <property type="entry name" value="ATPASEGAMMA"/>
</dbReference>
<dbReference type="SUPFAM" id="SSF52943">
    <property type="entry name" value="ATP synthase (F1-ATPase), gamma subunit"/>
    <property type="match status" value="1"/>
</dbReference>
<dbReference type="PROSITE" id="PS00153">
    <property type="entry name" value="ATPASE_GAMMA"/>
    <property type="match status" value="1"/>
</dbReference>
<keyword id="KW-0066">ATP synthesis</keyword>
<keyword id="KW-1003">Cell membrane</keyword>
<keyword id="KW-0139">CF(1)</keyword>
<keyword id="KW-0375">Hydrogen ion transport</keyword>
<keyword id="KW-0406">Ion transport</keyword>
<keyword id="KW-0472">Membrane</keyword>
<keyword id="KW-1185">Reference proteome</keyword>
<keyword id="KW-0813">Transport</keyword>
<proteinExistence type="inferred from homology"/>
<accession>Q73X58</accession>
<protein>
    <recommendedName>
        <fullName evidence="1">ATP synthase gamma chain</fullName>
    </recommendedName>
    <alternativeName>
        <fullName evidence="1">ATP synthase F1 sector gamma subunit</fullName>
    </alternativeName>
    <alternativeName>
        <fullName evidence="1">F-ATPase gamma subunit</fullName>
    </alternativeName>
</protein>
<sequence length="304" mass="33577">MAATLRELRGRIRSAGSIKKITKAQELIATSRIGRAQARLDSARPYAFQITAMLTTLAAEAALDHPLLVERPEPKRAGVLVVSSDRGLCGAYNASIFRRAEELFSLLREQGKTPVLYSVGRKALNYYTFRNWDISGSWTGFSEQPQYENAAEIAETLVESFMRGTGGEDEGESDAESVDELHIVYTEFKSMLSQSAVAHRIAPMVVEYVEEPPEVRTLYSFEPDATTLFESLLPRYLTTRVYAALLESAASELASRQRAMKSATDNADDLIKALTLMANRERQAQITQEISEIVGGANALADAR</sequence>
<name>ATPG_MYCPA</name>
<gene>
    <name evidence="1" type="primary">atpG</name>
    <name type="ordered locus">MAP_2452c</name>
</gene>
<feature type="chain" id="PRO_0000073317" description="ATP synthase gamma chain">
    <location>
        <begin position="1"/>
        <end position="304"/>
    </location>
</feature>
<comment type="function">
    <text evidence="1">Produces ATP from ADP in the presence of a proton gradient across the membrane. The gamma chain is believed to be important in regulating ATPase activity and the flow of protons through the CF(0) complex.</text>
</comment>
<comment type="subunit">
    <text evidence="1">F-type ATPases have 2 components, CF(1) - the catalytic core - and CF(0) - the membrane proton channel. CF(1) has five subunits: alpha(3), beta(3), gamma(1), delta(1), epsilon(1). CF(0) has three main subunits: a, b and c.</text>
</comment>
<comment type="subcellular location">
    <subcellularLocation>
        <location evidence="1">Cell membrane</location>
        <topology evidence="1">Peripheral membrane protein</topology>
    </subcellularLocation>
</comment>
<comment type="similarity">
    <text evidence="1">Belongs to the ATPase gamma chain family.</text>
</comment>
<evidence type="ECO:0000255" key="1">
    <source>
        <dbReference type="HAMAP-Rule" id="MF_00815"/>
    </source>
</evidence>
<organism>
    <name type="scientific">Mycolicibacterium paratuberculosis (strain ATCC BAA-968 / K-10)</name>
    <name type="common">Mycobacterium paratuberculosis</name>
    <dbReference type="NCBI Taxonomy" id="262316"/>
    <lineage>
        <taxon>Bacteria</taxon>
        <taxon>Bacillati</taxon>
        <taxon>Actinomycetota</taxon>
        <taxon>Actinomycetes</taxon>
        <taxon>Mycobacteriales</taxon>
        <taxon>Mycobacteriaceae</taxon>
        <taxon>Mycobacterium</taxon>
        <taxon>Mycobacterium avium complex (MAC)</taxon>
    </lineage>
</organism>